<organism>
    <name type="scientific">Salmonella arizonae (strain ATCC BAA-731 / CDC346-86 / RSK2980)</name>
    <dbReference type="NCBI Taxonomy" id="41514"/>
    <lineage>
        <taxon>Bacteria</taxon>
        <taxon>Pseudomonadati</taxon>
        <taxon>Pseudomonadota</taxon>
        <taxon>Gammaproteobacteria</taxon>
        <taxon>Enterobacterales</taxon>
        <taxon>Enterobacteriaceae</taxon>
        <taxon>Salmonella</taxon>
    </lineage>
</organism>
<accession>A9MJB9</accession>
<dbReference type="EC" id="4.2.1.113" evidence="1"/>
<dbReference type="EMBL" id="CP000880">
    <property type="protein sequence ID" value="ABX20519.1"/>
    <property type="molecule type" value="Genomic_DNA"/>
</dbReference>
<dbReference type="SMR" id="A9MJB9"/>
<dbReference type="STRING" id="41514.SARI_00593"/>
<dbReference type="KEGG" id="ses:SARI_00593"/>
<dbReference type="HOGENOM" id="CLU_030273_0_1_6"/>
<dbReference type="UniPathway" id="UPA00079"/>
<dbReference type="UniPathway" id="UPA01057">
    <property type="reaction ID" value="UER00165"/>
</dbReference>
<dbReference type="Proteomes" id="UP000002084">
    <property type="component" value="Chromosome"/>
</dbReference>
<dbReference type="GO" id="GO:0000287">
    <property type="term" value="F:magnesium ion binding"/>
    <property type="evidence" value="ECO:0007669"/>
    <property type="project" value="UniProtKB-UniRule"/>
</dbReference>
<dbReference type="GO" id="GO:0043748">
    <property type="term" value="F:O-succinylbenzoate synthase activity"/>
    <property type="evidence" value="ECO:0007669"/>
    <property type="project" value="UniProtKB-EC"/>
</dbReference>
<dbReference type="GO" id="GO:0009234">
    <property type="term" value="P:menaquinone biosynthetic process"/>
    <property type="evidence" value="ECO:0007669"/>
    <property type="project" value="UniProtKB-UniRule"/>
</dbReference>
<dbReference type="CDD" id="cd03320">
    <property type="entry name" value="OSBS"/>
    <property type="match status" value="1"/>
</dbReference>
<dbReference type="FunFam" id="3.20.20.120:FF:000006">
    <property type="entry name" value="o-succinylbenzoate synthase"/>
    <property type="match status" value="1"/>
</dbReference>
<dbReference type="Gene3D" id="3.20.20.120">
    <property type="entry name" value="Enolase-like C-terminal domain"/>
    <property type="match status" value="1"/>
</dbReference>
<dbReference type="Gene3D" id="3.30.390.10">
    <property type="entry name" value="Enolase-like, N-terminal domain"/>
    <property type="match status" value="1"/>
</dbReference>
<dbReference type="HAMAP" id="MF_00470">
    <property type="entry name" value="MenC_1"/>
    <property type="match status" value="1"/>
</dbReference>
<dbReference type="InterPro" id="IPR036849">
    <property type="entry name" value="Enolase-like_C_sf"/>
</dbReference>
<dbReference type="InterPro" id="IPR029017">
    <property type="entry name" value="Enolase-like_N"/>
</dbReference>
<dbReference type="InterPro" id="IPR029065">
    <property type="entry name" value="Enolase_C-like"/>
</dbReference>
<dbReference type="InterPro" id="IPR013342">
    <property type="entry name" value="Mandelate_racemase_C"/>
</dbReference>
<dbReference type="InterPro" id="IPR010196">
    <property type="entry name" value="OSB_synthase_MenC1"/>
</dbReference>
<dbReference type="InterPro" id="IPR041338">
    <property type="entry name" value="OSBS_N"/>
</dbReference>
<dbReference type="NCBIfam" id="TIGR01927">
    <property type="entry name" value="menC_gam_Gplu"/>
    <property type="match status" value="1"/>
</dbReference>
<dbReference type="NCBIfam" id="NF003473">
    <property type="entry name" value="PRK05105.1"/>
    <property type="match status" value="1"/>
</dbReference>
<dbReference type="PANTHER" id="PTHR48073:SF2">
    <property type="entry name" value="O-SUCCINYLBENZOATE SYNTHASE"/>
    <property type="match status" value="1"/>
</dbReference>
<dbReference type="PANTHER" id="PTHR48073">
    <property type="entry name" value="O-SUCCINYLBENZOATE SYNTHASE-RELATED"/>
    <property type="match status" value="1"/>
</dbReference>
<dbReference type="Pfam" id="PF21508">
    <property type="entry name" value="MenC_N"/>
    <property type="match status" value="1"/>
</dbReference>
<dbReference type="Pfam" id="PF13378">
    <property type="entry name" value="MR_MLE_C"/>
    <property type="match status" value="1"/>
</dbReference>
<dbReference type="SFLD" id="SFLDG00180">
    <property type="entry name" value="muconate_cycloisomerase"/>
    <property type="match status" value="1"/>
</dbReference>
<dbReference type="SFLD" id="SFLDF00009">
    <property type="entry name" value="o-succinylbenzoate_synthase"/>
    <property type="match status" value="1"/>
</dbReference>
<dbReference type="SMART" id="SM00922">
    <property type="entry name" value="MR_MLE"/>
    <property type="match status" value="1"/>
</dbReference>
<dbReference type="SUPFAM" id="SSF51604">
    <property type="entry name" value="Enolase C-terminal domain-like"/>
    <property type="match status" value="1"/>
</dbReference>
<dbReference type="SUPFAM" id="SSF54826">
    <property type="entry name" value="Enolase N-terminal domain-like"/>
    <property type="match status" value="1"/>
</dbReference>
<name>MENC_SALAR</name>
<comment type="function">
    <text evidence="1">Converts 2-succinyl-6-hydroxy-2,4-cyclohexadiene-1-carboxylate (SHCHC) to 2-succinylbenzoate (OSB).</text>
</comment>
<comment type="catalytic activity">
    <reaction evidence="1">
        <text>(1R,6R)-6-hydroxy-2-succinyl-cyclohexa-2,4-diene-1-carboxylate = 2-succinylbenzoate + H2O</text>
        <dbReference type="Rhea" id="RHEA:10196"/>
        <dbReference type="ChEBI" id="CHEBI:15377"/>
        <dbReference type="ChEBI" id="CHEBI:18325"/>
        <dbReference type="ChEBI" id="CHEBI:58689"/>
        <dbReference type="EC" id="4.2.1.113"/>
    </reaction>
</comment>
<comment type="cofactor">
    <cofactor evidence="1">
        <name>a divalent metal cation</name>
        <dbReference type="ChEBI" id="CHEBI:60240"/>
    </cofactor>
</comment>
<comment type="pathway">
    <text evidence="1">Quinol/quinone metabolism; 1,4-dihydroxy-2-naphthoate biosynthesis; 1,4-dihydroxy-2-naphthoate from chorismate: step 4/7.</text>
</comment>
<comment type="pathway">
    <text evidence="1">Quinol/quinone metabolism; menaquinone biosynthesis.</text>
</comment>
<comment type="similarity">
    <text evidence="1">Belongs to the mandelate racemase/muconate lactonizing enzyme family. MenC type 1 subfamily.</text>
</comment>
<feature type="chain" id="PRO_1000081204" description="o-succinylbenzoate synthase">
    <location>
        <begin position="1"/>
        <end position="320"/>
    </location>
</feature>
<feature type="active site" description="Proton donor" evidence="1">
    <location>
        <position position="133"/>
    </location>
</feature>
<feature type="active site" description="Proton acceptor" evidence="1">
    <location>
        <position position="235"/>
    </location>
</feature>
<feature type="binding site" evidence="1">
    <location>
        <position position="161"/>
    </location>
    <ligand>
        <name>Mg(2+)</name>
        <dbReference type="ChEBI" id="CHEBI:18420"/>
    </ligand>
</feature>
<feature type="binding site" evidence="1">
    <location>
        <position position="190"/>
    </location>
    <ligand>
        <name>Mg(2+)</name>
        <dbReference type="ChEBI" id="CHEBI:18420"/>
    </ligand>
</feature>
<feature type="binding site" evidence="1">
    <location>
        <position position="213"/>
    </location>
    <ligand>
        <name>Mg(2+)</name>
        <dbReference type="ChEBI" id="CHEBI:18420"/>
    </ligand>
</feature>
<gene>
    <name evidence="1" type="primary">menC</name>
    <name type="ordered locus">SARI_00593</name>
</gene>
<reference key="1">
    <citation type="submission" date="2007-11" db="EMBL/GenBank/DDBJ databases">
        <authorList>
            <consortium name="The Salmonella enterica serovar Arizonae Genome Sequencing Project"/>
            <person name="McClelland M."/>
            <person name="Sanderson E.K."/>
            <person name="Porwollik S."/>
            <person name="Spieth J."/>
            <person name="Clifton W.S."/>
            <person name="Fulton R."/>
            <person name="Chunyan W."/>
            <person name="Wollam A."/>
            <person name="Shah N."/>
            <person name="Pepin K."/>
            <person name="Bhonagiri V."/>
            <person name="Nash W."/>
            <person name="Johnson M."/>
            <person name="Thiruvilangam P."/>
            <person name="Wilson R."/>
        </authorList>
    </citation>
    <scope>NUCLEOTIDE SEQUENCE [LARGE SCALE GENOMIC DNA]</scope>
    <source>
        <strain>ATCC BAA-731 / CDC346-86 / RSK2980</strain>
    </source>
</reference>
<sequence length="320" mass="35231">MRSAQVYRWQIPMDAGVVLRDRRLKTRDGLYVCLRDGEREGWGEISPLPGFSSETWEEAQTALLTWVNDWLQRSDALPEMPSVAFGASCALAELTGVLPAAADYRAAPLCTGDPDDLVLRLADMPGEKIAKVKVGLYEAVRDGMVVNLLLEAIPDLHLRLDANRAWTPLKAQQFAKYVNPDYRPRIAFLEEPCKTRDDSCAFARETGIAIAWDESLREPDFVFEAQEGVSAVVIKPMLTGALDKVRAQVAAAHALGLTAVISSSIESSLGLTQLARIAAWLTPGTLPGLDTLHLMQTQQVRPWPGSALPCLNRDELERLL</sequence>
<keyword id="KW-0456">Lyase</keyword>
<keyword id="KW-0460">Magnesium</keyword>
<keyword id="KW-0474">Menaquinone biosynthesis</keyword>
<keyword id="KW-0479">Metal-binding</keyword>
<keyword id="KW-1185">Reference proteome</keyword>
<proteinExistence type="inferred from homology"/>
<evidence type="ECO:0000255" key="1">
    <source>
        <dbReference type="HAMAP-Rule" id="MF_00470"/>
    </source>
</evidence>
<protein>
    <recommendedName>
        <fullName evidence="1">o-succinylbenzoate synthase</fullName>
        <shortName evidence="1">OSB synthase</shortName>
        <shortName evidence="1">OSBS</shortName>
        <ecNumber evidence="1">4.2.1.113</ecNumber>
    </recommendedName>
    <alternativeName>
        <fullName evidence="1">4-(2'-carboxyphenyl)-4-oxybutyric acid synthase</fullName>
    </alternativeName>
    <alternativeName>
        <fullName evidence="1">o-succinylbenzoic acid synthase</fullName>
    </alternativeName>
</protein>